<keyword id="KW-0963">Cytoplasm</keyword>
<keyword id="KW-0274">FAD</keyword>
<keyword id="KW-0285">Flavoprotein</keyword>
<keyword id="KW-0489">Methyltransferase</keyword>
<keyword id="KW-0520">NAD</keyword>
<keyword id="KW-0521">NADP</keyword>
<keyword id="KW-1185">Reference proteome</keyword>
<keyword id="KW-0808">Transferase</keyword>
<keyword id="KW-0819">tRNA processing</keyword>
<dbReference type="EC" id="2.1.1.74" evidence="1"/>
<dbReference type="EMBL" id="CP001145">
    <property type="protein sequence ID" value="ACI17485.1"/>
    <property type="molecule type" value="Genomic_DNA"/>
</dbReference>
<dbReference type="RefSeq" id="WP_012544137.1">
    <property type="nucleotide sequence ID" value="NC_011295.1"/>
</dbReference>
<dbReference type="SMR" id="B5Y8G1"/>
<dbReference type="STRING" id="309798.COPRO5265_0710"/>
<dbReference type="KEGG" id="cpo:COPRO5265_0710"/>
<dbReference type="eggNOG" id="COG1206">
    <property type="taxonomic scope" value="Bacteria"/>
</dbReference>
<dbReference type="HOGENOM" id="CLU_033057_1_0_9"/>
<dbReference type="OrthoDB" id="9803114at2"/>
<dbReference type="Proteomes" id="UP000001732">
    <property type="component" value="Chromosome"/>
</dbReference>
<dbReference type="GO" id="GO:0005829">
    <property type="term" value="C:cytosol"/>
    <property type="evidence" value="ECO:0007669"/>
    <property type="project" value="TreeGrafter"/>
</dbReference>
<dbReference type="GO" id="GO:0050660">
    <property type="term" value="F:flavin adenine dinucleotide binding"/>
    <property type="evidence" value="ECO:0007669"/>
    <property type="project" value="UniProtKB-UniRule"/>
</dbReference>
<dbReference type="GO" id="GO:0047151">
    <property type="term" value="F:tRNA (uracil(54)-C5)-methyltransferase activity, 5,10-methylenetetrahydrofolate-dependent"/>
    <property type="evidence" value="ECO:0007669"/>
    <property type="project" value="UniProtKB-UniRule"/>
</dbReference>
<dbReference type="GO" id="GO:0030488">
    <property type="term" value="P:tRNA methylation"/>
    <property type="evidence" value="ECO:0007669"/>
    <property type="project" value="TreeGrafter"/>
</dbReference>
<dbReference type="GO" id="GO:0002098">
    <property type="term" value="P:tRNA wobble uridine modification"/>
    <property type="evidence" value="ECO:0007669"/>
    <property type="project" value="TreeGrafter"/>
</dbReference>
<dbReference type="Gene3D" id="3.50.50.60">
    <property type="entry name" value="FAD/NAD(P)-binding domain"/>
    <property type="match status" value="2"/>
</dbReference>
<dbReference type="HAMAP" id="MF_01037">
    <property type="entry name" value="TrmFO"/>
    <property type="match status" value="1"/>
</dbReference>
<dbReference type="InterPro" id="IPR036188">
    <property type="entry name" value="FAD/NAD-bd_sf"/>
</dbReference>
<dbReference type="InterPro" id="IPR002218">
    <property type="entry name" value="MnmG-rel"/>
</dbReference>
<dbReference type="InterPro" id="IPR040131">
    <property type="entry name" value="MnmG_N"/>
</dbReference>
<dbReference type="InterPro" id="IPR004417">
    <property type="entry name" value="TrmFO"/>
</dbReference>
<dbReference type="NCBIfam" id="TIGR00137">
    <property type="entry name" value="gid_trmFO"/>
    <property type="match status" value="1"/>
</dbReference>
<dbReference type="NCBIfam" id="NF003739">
    <property type="entry name" value="PRK05335.1"/>
    <property type="match status" value="1"/>
</dbReference>
<dbReference type="PANTHER" id="PTHR11806">
    <property type="entry name" value="GLUCOSE INHIBITED DIVISION PROTEIN A"/>
    <property type="match status" value="1"/>
</dbReference>
<dbReference type="PANTHER" id="PTHR11806:SF2">
    <property type="entry name" value="METHYLENETETRAHYDROFOLATE--TRNA-(URACIL-5-)-METHYLTRANSFERASE TRMFO"/>
    <property type="match status" value="1"/>
</dbReference>
<dbReference type="Pfam" id="PF01134">
    <property type="entry name" value="GIDA"/>
    <property type="match status" value="1"/>
</dbReference>
<dbReference type="SUPFAM" id="SSF51905">
    <property type="entry name" value="FAD/NAD(P)-binding domain"/>
    <property type="match status" value="2"/>
</dbReference>
<protein>
    <recommendedName>
        <fullName evidence="1">Methylenetetrahydrofolate--tRNA-(uracil-5-)-methyltransferase TrmFO</fullName>
        <ecNumber evidence="1">2.1.1.74</ecNumber>
    </recommendedName>
    <alternativeName>
        <fullName evidence="1">Folate-dependent tRNA (uracil-5-)-methyltransferase</fullName>
    </alternativeName>
    <alternativeName>
        <fullName evidence="1">Folate-dependent tRNA(M-5-U54)-methyltransferase</fullName>
    </alternativeName>
</protein>
<feature type="chain" id="PRO_1000149469" description="Methylenetetrahydrofolate--tRNA-(uracil-5-)-methyltransferase TrmFO">
    <location>
        <begin position="1"/>
        <end position="432"/>
    </location>
</feature>
<feature type="binding site" evidence="1">
    <location>
        <begin position="7"/>
        <end position="12"/>
    </location>
    <ligand>
        <name>FAD</name>
        <dbReference type="ChEBI" id="CHEBI:57692"/>
    </ligand>
</feature>
<accession>B5Y8G1</accession>
<name>TRMFO_COPPD</name>
<comment type="function">
    <text evidence="1">Catalyzes the folate-dependent formation of 5-methyl-uridine at position 54 (M-5-U54) in all tRNAs.</text>
</comment>
<comment type="catalytic activity">
    <reaction evidence="1">
        <text>uridine(54) in tRNA + (6R)-5,10-methylene-5,6,7,8-tetrahydrofolate + NADH + H(+) = 5-methyluridine(54) in tRNA + (6S)-5,6,7,8-tetrahydrofolate + NAD(+)</text>
        <dbReference type="Rhea" id="RHEA:16873"/>
        <dbReference type="Rhea" id="RHEA-COMP:10167"/>
        <dbReference type="Rhea" id="RHEA-COMP:10193"/>
        <dbReference type="ChEBI" id="CHEBI:15378"/>
        <dbReference type="ChEBI" id="CHEBI:15636"/>
        <dbReference type="ChEBI" id="CHEBI:57453"/>
        <dbReference type="ChEBI" id="CHEBI:57540"/>
        <dbReference type="ChEBI" id="CHEBI:57945"/>
        <dbReference type="ChEBI" id="CHEBI:65315"/>
        <dbReference type="ChEBI" id="CHEBI:74447"/>
        <dbReference type="EC" id="2.1.1.74"/>
    </reaction>
</comment>
<comment type="catalytic activity">
    <reaction evidence="1">
        <text>uridine(54) in tRNA + (6R)-5,10-methylene-5,6,7,8-tetrahydrofolate + NADPH + H(+) = 5-methyluridine(54) in tRNA + (6S)-5,6,7,8-tetrahydrofolate + NADP(+)</text>
        <dbReference type="Rhea" id="RHEA:62372"/>
        <dbReference type="Rhea" id="RHEA-COMP:10167"/>
        <dbReference type="Rhea" id="RHEA-COMP:10193"/>
        <dbReference type="ChEBI" id="CHEBI:15378"/>
        <dbReference type="ChEBI" id="CHEBI:15636"/>
        <dbReference type="ChEBI" id="CHEBI:57453"/>
        <dbReference type="ChEBI" id="CHEBI:57783"/>
        <dbReference type="ChEBI" id="CHEBI:58349"/>
        <dbReference type="ChEBI" id="CHEBI:65315"/>
        <dbReference type="ChEBI" id="CHEBI:74447"/>
        <dbReference type="EC" id="2.1.1.74"/>
    </reaction>
</comment>
<comment type="cofactor">
    <cofactor evidence="1">
        <name>FAD</name>
        <dbReference type="ChEBI" id="CHEBI:57692"/>
    </cofactor>
</comment>
<comment type="subcellular location">
    <subcellularLocation>
        <location evidence="1">Cytoplasm</location>
    </subcellularLocation>
</comment>
<comment type="similarity">
    <text evidence="1">Belongs to the MnmG family. TrmFO subfamily.</text>
</comment>
<gene>
    <name evidence="1" type="primary">trmFO</name>
    <name type="ordered locus">COPRO5265_0710</name>
</gene>
<sequence>MDVWVIGGGLAGSEAALTLADLGFPVTLFEMRPAVMTPAHKTSKLAELVCSNSLGSLSTDNAKGELLFELKVLGSSLVNLAFEAQIGGDKALVVDRELFSTLVEDAVRSHRNITVVRAEITEIPKDVPCIIAPGPLIKGDLLHFLEEREGRCEAQYYDATSPSILSETIDMDYAFWGNRFGEGSDYLNVPLSKEEYYWFVEQLLNAREAHRHDFDKPDAFFERCLPVEEIARRGKESLAFGPMRPTGLAIPEKFRDVHAVIQLRKENASGTILNMVGFQTGISHTEQISIFKQLPAFKNAVFVRLGQIHQNRFLPGVVNKFFQSRTNRLWFYAGQFTGTEGYLEAIAGGLWAGINVARLLGGEKLIPLPEESMLGGLVTYIEQSLPEVKQPMGVNWGLVPPVEGKKSERKQKRVDRARIAIEYAARELGRVT</sequence>
<reference key="1">
    <citation type="submission" date="2008-08" db="EMBL/GenBank/DDBJ databases">
        <title>The complete genome sequence of Coprothermobacter proteolyticus strain ATCC 5245 / DSM 5265 / BT.</title>
        <authorList>
            <person name="Dodson R.J."/>
            <person name="Durkin A.S."/>
            <person name="Wu M."/>
            <person name="Eisen J."/>
            <person name="Sutton G."/>
        </authorList>
    </citation>
    <scope>NUCLEOTIDE SEQUENCE [LARGE SCALE GENOMIC DNA]</scope>
    <source>
        <strain>ATCC 35245 / DSM 5265 / OCM 4 / BT</strain>
    </source>
</reference>
<evidence type="ECO:0000255" key="1">
    <source>
        <dbReference type="HAMAP-Rule" id="MF_01037"/>
    </source>
</evidence>
<proteinExistence type="inferred from homology"/>
<organism>
    <name type="scientific">Coprothermobacter proteolyticus (strain ATCC 35245 / DSM 5265 / OCM 4 / BT)</name>
    <dbReference type="NCBI Taxonomy" id="309798"/>
    <lineage>
        <taxon>Bacteria</taxon>
        <taxon>Pseudomonadati</taxon>
        <taxon>Coprothermobacterota</taxon>
        <taxon>Coprothermobacteria</taxon>
        <taxon>Coprothermobacterales</taxon>
        <taxon>Coprothermobacteraceae</taxon>
        <taxon>Coprothermobacter</taxon>
    </lineage>
</organism>